<accession>B1KG87</accession>
<comment type="function">
    <text evidence="1">The glycine cleavage system catalyzes the degradation of glycine. The P protein binds the alpha-amino group of glycine through its pyridoxal phosphate cofactor; CO(2) is released and the remaining methylamine moiety is then transferred to the lipoamide cofactor of the H protein.</text>
</comment>
<comment type="catalytic activity">
    <reaction evidence="1">
        <text>N(6)-[(R)-lipoyl]-L-lysyl-[glycine-cleavage complex H protein] + glycine + H(+) = N(6)-[(R)-S(8)-aminomethyldihydrolipoyl]-L-lysyl-[glycine-cleavage complex H protein] + CO2</text>
        <dbReference type="Rhea" id="RHEA:24304"/>
        <dbReference type="Rhea" id="RHEA-COMP:10494"/>
        <dbReference type="Rhea" id="RHEA-COMP:10495"/>
        <dbReference type="ChEBI" id="CHEBI:15378"/>
        <dbReference type="ChEBI" id="CHEBI:16526"/>
        <dbReference type="ChEBI" id="CHEBI:57305"/>
        <dbReference type="ChEBI" id="CHEBI:83099"/>
        <dbReference type="ChEBI" id="CHEBI:83143"/>
        <dbReference type="EC" id="1.4.4.2"/>
    </reaction>
</comment>
<comment type="cofactor">
    <cofactor evidence="1">
        <name>pyridoxal 5'-phosphate</name>
        <dbReference type="ChEBI" id="CHEBI:597326"/>
    </cofactor>
</comment>
<comment type="subunit">
    <text evidence="1">The glycine cleavage system is composed of four proteins: P, T, L and H.</text>
</comment>
<comment type="similarity">
    <text evidence="1">Belongs to the GcvP family.</text>
</comment>
<organism>
    <name type="scientific">Shewanella woodyi (strain ATCC 51908 / MS32)</name>
    <dbReference type="NCBI Taxonomy" id="392500"/>
    <lineage>
        <taxon>Bacteria</taxon>
        <taxon>Pseudomonadati</taxon>
        <taxon>Pseudomonadota</taxon>
        <taxon>Gammaproteobacteria</taxon>
        <taxon>Alteromonadales</taxon>
        <taxon>Shewanellaceae</taxon>
        <taxon>Shewanella</taxon>
    </lineage>
</organism>
<gene>
    <name evidence="1" type="primary">gcvP</name>
    <name type="ordered locus">Swoo_3967</name>
</gene>
<evidence type="ECO:0000255" key="1">
    <source>
        <dbReference type="HAMAP-Rule" id="MF_00711"/>
    </source>
</evidence>
<feature type="chain" id="PRO_1000132456" description="Glycine dehydrogenase (decarboxylating)">
    <location>
        <begin position="1"/>
        <end position="969"/>
    </location>
</feature>
<feature type="modified residue" description="N6-(pyridoxal phosphate)lysine" evidence="1">
    <location>
        <position position="716"/>
    </location>
</feature>
<dbReference type="EC" id="1.4.4.2" evidence="1"/>
<dbReference type="EMBL" id="CP000961">
    <property type="protein sequence ID" value="ACA88224.1"/>
    <property type="molecule type" value="Genomic_DNA"/>
</dbReference>
<dbReference type="RefSeq" id="WP_012326554.1">
    <property type="nucleotide sequence ID" value="NC_010506.1"/>
</dbReference>
<dbReference type="SMR" id="B1KG87"/>
<dbReference type="STRING" id="392500.Swoo_3967"/>
<dbReference type="KEGG" id="swd:Swoo_3967"/>
<dbReference type="eggNOG" id="COG0403">
    <property type="taxonomic scope" value="Bacteria"/>
</dbReference>
<dbReference type="eggNOG" id="COG1003">
    <property type="taxonomic scope" value="Bacteria"/>
</dbReference>
<dbReference type="HOGENOM" id="CLU_004620_1_1_6"/>
<dbReference type="Proteomes" id="UP000002168">
    <property type="component" value="Chromosome"/>
</dbReference>
<dbReference type="GO" id="GO:0005829">
    <property type="term" value="C:cytosol"/>
    <property type="evidence" value="ECO:0007669"/>
    <property type="project" value="TreeGrafter"/>
</dbReference>
<dbReference type="GO" id="GO:0005960">
    <property type="term" value="C:glycine cleavage complex"/>
    <property type="evidence" value="ECO:0007669"/>
    <property type="project" value="TreeGrafter"/>
</dbReference>
<dbReference type="GO" id="GO:0016594">
    <property type="term" value="F:glycine binding"/>
    <property type="evidence" value="ECO:0007669"/>
    <property type="project" value="TreeGrafter"/>
</dbReference>
<dbReference type="GO" id="GO:0004375">
    <property type="term" value="F:glycine dehydrogenase (decarboxylating) activity"/>
    <property type="evidence" value="ECO:0007669"/>
    <property type="project" value="UniProtKB-EC"/>
</dbReference>
<dbReference type="GO" id="GO:0030170">
    <property type="term" value="F:pyridoxal phosphate binding"/>
    <property type="evidence" value="ECO:0007669"/>
    <property type="project" value="TreeGrafter"/>
</dbReference>
<dbReference type="GO" id="GO:0019464">
    <property type="term" value="P:glycine decarboxylation via glycine cleavage system"/>
    <property type="evidence" value="ECO:0007669"/>
    <property type="project" value="UniProtKB-UniRule"/>
</dbReference>
<dbReference type="CDD" id="cd00613">
    <property type="entry name" value="GDC-P"/>
    <property type="match status" value="2"/>
</dbReference>
<dbReference type="FunFam" id="3.40.640.10:FF:000005">
    <property type="entry name" value="Glycine dehydrogenase (decarboxylating), mitochondrial"/>
    <property type="match status" value="1"/>
</dbReference>
<dbReference type="FunFam" id="3.90.1150.10:FF:000007">
    <property type="entry name" value="Glycine dehydrogenase (decarboxylating), mitochondrial"/>
    <property type="match status" value="1"/>
</dbReference>
<dbReference type="FunFam" id="3.40.640.10:FF:000007">
    <property type="entry name" value="glycine dehydrogenase (Decarboxylating), mitochondrial"/>
    <property type="match status" value="1"/>
</dbReference>
<dbReference type="Gene3D" id="3.90.1150.10">
    <property type="entry name" value="Aspartate Aminotransferase, domain 1"/>
    <property type="match status" value="2"/>
</dbReference>
<dbReference type="Gene3D" id="3.40.640.10">
    <property type="entry name" value="Type I PLP-dependent aspartate aminotransferase-like (Major domain)"/>
    <property type="match status" value="2"/>
</dbReference>
<dbReference type="HAMAP" id="MF_00711">
    <property type="entry name" value="GcvP"/>
    <property type="match status" value="1"/>
</dbReference>
<dbReference type="InterPro" id="IPR003437">
    <property type="entry name" value="GcvP"/>
</dbReference>
<dbReference type="InterPro" id="IPR049316">
    <property type="entry name" value="GDC-P_C"/>
</dbReference>
<dbReference type="InterPro" id="IPR049315">
    <property type="entry name" value="GDC-P_N"/>
</dbReference>
<dbReference type="InterPro" id="IPR020581">
    <property type="entry name" value="GDC_P"/>
</dbReference>
<dbReference type="InterPro" id="IPR015424">
    <property type="entry name" value="PyrdxlP-dep_Trfase"/>
</dbReference>
<dbReference type="InterPro" id="IPR015421">
    <property type="entry name" value="PyrdxlP-dep_Trfase_major"/>
</dbReference>
<dbReference type="InterPro" id="IPR015422">
    <property type="entry name" value="PyrdxlP-dep_Trfase_small"/>
</dbReference>
<dbReference type="NCBIfam" id="TIGR00461">
    <property type="entry name" value="gcvP"/>
    <property type="match status" value="1"/>
</dbReference>
<dbReference type="NCBIfam" id="NF003346">
    <property type="entry name" value="PRK04366.1"/>
    <property type="match status" value="1"/>
</dbReference>
<dbReference type="PANTHER" id="PTHR11773:SF13">
    <property type="entry name" value="GLYCINE DEHYDROGENASE (DECARBOXYLATING)"/>
    <property type="match status" value="1"/>
</dbReference>
<dbReference type="PANTHER" id="PTHR11773">
    <property type="entry name" value="GLYCINE DEHYDROGENASE, DECARBOXYLATING"/>
    <property type="match status" value="1"/>
</dbReference>
<dbReference type="Pfam" id="PF21478">
    <property type="entry name" value="GcvP2_C"/>
    <property type="match status" value="1"/>
</dbReference>
<dbReference type="Pfam" id="PF02347">
    <property type="entry name" value="GDC-P"/>
    <property type="match status" value="2"/>
</dbReference>
<dbReference type="SUPFAM" id="SSF53383">
    <property type="entry name" value="PLP-dependent transferases"/>
    <property type="match status" value="2"/>
</dbReference>
<reference key="1">
    <citation type="submission" date="2008-02" db="EMBL/GenBank/DDBJ databases">
        <title>Complete sequence of Shewanella woodyi ATCC 51908.</title>
        <authorList>
            <consortium name="US DOE Joint Genome Institute"/>
            <person name="Copeland A."/>
            <person name="Lucas S."/>
            <person name="Lapidus A."/>
            <person name="Glavina del Rio T."/>
            <person name="Dalin E."/>
            <person name="Tice H."/>
            <person name="Bruce D."/>
            <person name="Goodwin L."/>
            <person name="Pitluck S."/>
            <person name="Sims D."/>
            <person name="Brettin T."/>
            <person name="Detter J.C."/>
            <person name="Han C."/>
            <person name="Kuske C.R."/>
            <person name="Schmutz J."/>
            <person name="Larimer F."/>
            <person name="Land M."/>
            <person name="Hauser L."/>
            <person name="Kyrpides N."/>
            <person name="Lykidis A."/>
            <person name="Zhao J.-S."/>
            <person name="Richardson P."/>
        </authorList>
    </citation>
    <scope>NUCLEOTIDE SEQUENCE [LARGE SCALE GENOMIC DNA]</scope>
    <source>
        <strain>ATCC 51908 / MS32</strain>
    </source>
</reference>
<sequence>MTTETLTTLEQHDRFLGRHIGPDSEQRQEMLNYVGAESLEDLTTQIVPESIRLNRDLAVGDNVSEAEGLAYIRQIADKNKVFKSYIGMGYYGTEVPSVIQRNVLENPGWYTAYTPYQPEIAQGRLEAILNFQQLSMDLTGLDLASSSLLDEATAAAEAMALAKRVSKAKKANIFFVADDVFPQTLDVIKTRAECFGMEVVVGPAEEAVNYELFGALFQYTNRYGQITDFTELFTALHEKKAIISVAADIMSLVMLKSPGSMGADVVFGNSQRFGVPMGFGGPHAAFFVSRDAHKRSLPGRIIGVSQDTRGNRALRMAMQTREQHIRREKANSNICTAQVLLANMASFYAVFHGPQGLKVIAERIHRLTDILAAGLTAKGVELVNNTWFDTLSIKGLDAKAVQKRADAAGINLRVDSCSESDGSSDQVLGVSLAETTTRTDVTQLFDVILGEGHGLDVAALDAQVMADSTSVPAELVRQDAILTHPTFNRYHSETEMMRYIKRLENKDLALNHSMISLGSCTMKLNAATEMMPITWPEFGNMHPFCPQDQAQGYAQLLGELSEWLVDITGYDAVSLQPNSGAQGEYAGLLAIKQYHESRGDAHRNICLIPSSAHGTNPASAQLAGMKIVVTACDKAGNIDMEDLKAKAAEVADNLSCIMVTYPSTHGVYEETIGEICEVIHQHGGQVYLDGANMNAQVGLTSPGFIGADVSHLNLHKTFAIPHGGGGPGMGPIGVKKHLAPFLSGHSVVKHGLESDGNGAVSAAPYGSAGILPITWMYIKLLGKQGLRESTQVALLNANYMMKKLSEHYPVLYTGRNDRVAHECIIDLRPLKEASGVTEMDIAKRLNDYGFHAPTMSFPVAGTLMIEPTESESKVELDRFIEAMVSIRAEAARVESGEWPVDNNPLHNAPHTLADIMDPEFDSRPYSREVAVFPTAAVKQNKFWPTVNRIDDVYGDRNLFCACVPISDYE</sequence>
<name>GCSP_SHEWM</name>
<keyword id="KW-0560">Oxidoreductase</keyword>
<keyword id="KW-0663">Pyridoxal phosphate</keyword>
<keyword id="KW-1185">Reference proteome</keyword>
<protein>
    <recommendedName>
        <fullName evidence="1">Glycine dehydrogenase (decarboxylating)</fullName>
        <ecNumber evidence="1">1.4.4.2</ecNumber>
    </recommendedName>
    <alternativeName>
        <fullName evidence="1">Glycine cleavage system P-protein</fullName>
    </alternativeName>
    <alternativeName>
        <fullName evidence="1">Glycine decarboxylase</fullName>
    </alternativeName>
    <alternativeName>
        <fullName evidence="1">Glycine dehydrogenase (aminomethyl-transferring)</fullName>
    </alternativeName>
</protein>
<proteinExistence type="inferred from homology"/>